<proteinExistence type="inferred from homology"/>
<comment type="function">
    <text evidence="1">Could be responsible for synthesis of pseudouridine from uracil-13 in transfer RNAs.</text>
</comment>
<comment type="catalytic activity">
    <reaction evidence="1">
        <text>uridine(13) in tRNA = pseudouridine(13) in tRNA</text>
        <dbReference type="Rhea" id="RHEA:42540"/>
        <dbReference type="Rhea" id="RHEA-COMP:10105"/>
        <dbReference type="Rhea" id="RHEA-COMP:10106"/>
        <dbReference type="ChEBI" id="CHEBI:65314"/>
        <dbReference type="ChEBI" id="CHEBI:65315"/>
        <dbReference type="EC" id="5.4.99.27"/>
    </reaction>
</comment>
<comment type="similarity">
    <text evidence="1">Belongs to the pseudouridine synthase TruD family.</text>
</comment>
<comment type="sequence caution" evidence="2">
    <conflict type="erroneous initiation">
        <sequence resource="EMBL-CDS" id="AAG18841"/>
    </conflict>
</comment>
<sequence length="434" mass="47551">MREAHPIERAVGMAYYASDSDGTGGRLRDSPADFRVRELEAFDTQPADAPTGDYPWLVVRATLHEWDTNDFARELANTVGMSRERVRWAGTKDRHAVTTQLFAVRDLDAAQVPEIRNADIEVVGRAGRGLEFGDLAGNAFEIVVRDPDAPERAAAVADELAAFGGGTVGTPNYFGQQRFGSKRPVTHEVGLAILRDDWEAAAMAYLGAPTEHEPADSQRAREYVAETRDWTGALAEFPQRLRYERTMLHELADGGSFRDAVETFPSNLQQLFVHAAQSYVFNRIVSERMARGLPFGEPVAGDVVWFADSDADAAVAQPDAARQQRVTDSRVDVMARHCERGRAFVTAPLVGTDTEFADGDPGEITRGVLDDLGLSRADFDLPGEFDSAGSRRAILLRPDLTVSHDPLAFEFALPSGSYATVVLREFLKPSPLAL</sequence>
<reference key="1">
    <citation type="journal article" date="2000" name="Proc. Natl. Acad. Sci. U.S.A.">
        <title>Genome sequence of Halobacterium species NRC-1.</title>
        <authorList>
            <person name="Ng W.V."/>
            <person name="Kennedy S.P."/>
            <person name="Mahairas G.G."/>
            <person name="Berquist B."/>
            <person name="Pan M."/>
            <person name="Shukla H.D."/>
            <person name="Lasky S.R."/>
            <person name="Baliga N.S."/>
            <person name="Thorsson V."/>
            <person name="Sbrogna J."/>
            <person name="Swartzell S."/>
            <person name="Weir D."/>
            <person name="Hall J."/>
            <person name="Dahl T.A."/>
            <person name="Welti R."/>
            <person name="Goo Y.A."/>
            <person name="Leithauser B."/>
            <person name="Keller K."/>
            <person name="Cruz R."/>
            <person name="Danson M.J."/>
            <person name="Hough D.W."/>
            <person name="Maddocks D.G."/>
            <person name="Jablonski P.E."/>
            <person name="Krebs M.P."/>
            <person name="Angevine C.M."/>
            <person name="Dale H."/>
            <person name="Isenbarger T.A."/>
            <person name="Peck R.F."/>
            <person name="Pohlschroder M."/>
            <person name="Spudich J.L."/>
            <person name="Jung K.-H."/>
            <person name="Alam M."/>
            <person name="Freitas T."/>
            <person name="Hou S."/>
            <person name="Daniels C.J."/>
            <person name="Dennis P.P."/>
            <person name="Omer A.D."/>
            <person name="Ebhardt H."/>
            <person name="Lowe T.M."/>
            <person name="Liang P."/>
            <person name="Riley M."/>
            <person name="Hood L."/>
            <person name="DasSarma S."/>
        </authorList>
    </citation>
    <scope>NUCLEOTIDE SEQUENCE [LARGE SCALE GENOMIC DNA]</scope>
    <source>
        <strain>ATCC 700922 / JCM 11081 / NRC-1</strain>
    </source>
</reference>
<gene>
    <name evidence="1" type="primary">truD</name>
    <name type="ordered locus">VNG_0243C</name>
</gene>
<evidence type="ECO:0000255" key="1">
    <source>
        <dbReference type="HAMAP-Rule" id="MF_01082"/>
    </source>
</evidence>
<evidence type="ECO:0000305" key="2"/>
<accession>Q9HSG5</accession>
<feature type="chain" id="PRO_0000152538" description="Probable tRNA pseudouridine synthase D">
    <location>
        <begin position="1"/>
        <end position="434"/>
    </location>
</feature>
<feature type="domain" description="TRUD" evidence="1">
    <location>
        <begin position="169"/>
        <end position="396"/>
    </location>
</feature>
<feature type="active site" description="Nucleophile" evidence="1">
    <location>
        <position position="93"/>
    </location>
</feature>
<name>TRUD_HALSA</name>
<organism>
    <name type="scientific">Halobacterium salinarum (strain ATCC 700922 / JCM 11081 / NRC-1)</name>
    <name type="common">Halobacterium halobium</name>
    <dbReference type="NCBI Taxonomy" id="64091"/>
    <lineage>
        <taxon>Archaea</taxon>
        <taxon>Methanobacteriati</taxon>
        <taxon>Methanobacteriota</taxon>
        <taxon>Stenosarchaea group</taxon>
        <taxon>Halobacteria</taxon>
        <taxon>Halobacteriales</taxon>
        <taxon>Halobacteriaceae</taxon>
        <taxon>Halobacterium</taxon>
        <taxon>Halobacterium salinarum NRC-34001</taxon>
    </lineage>
</organism>
<keyword id="KW-0413">Isomerase</keyword>
<keyword id="KW-1185">Reference proteome</keyword>
<keyword id="KW-0819">tRNA processing</keyword>
<protein>
    <recommendedName>
        <fullName evidence="1">Probable tRNA pseudouridine synthase D</fullName>
        <ecNumber evidence="1">5.4.99.27</ecNumber>
    </recommendedName>
    <alternativeName>
        <fullName evidence="1">tRNA pseudouridine(13) synthase</fullName>
    </alternativeName>
    <alternativeName>
        <fullName evidence="1">tRNA pseudouridylate synthase D</fullName>
    </alternativeName>
    <alternativeName>
        <fullName evidence="1">tRNA-uridine isomerase D</fullName>
    </alternativeName>
</protein>
<dbReference type="EC" id="5.4.99.27" evidence="1"/>
<dbReference type="EMBL" id="AE004437">
    <property type="protein sequence ID" value="AAG18841.1"/>
    <property type="status" value="ALT_INIT"/>
    <property type="molecule type" value="Genomic_DNA"/>
</dbReference>
<dbReference type="PIR" id="E84184">
    <property type="entry name" value="E84184"/>
</dbReference>
<dbReference type="RefSeq" id="WP_010902134.1">
    <property type="nucleotide sequence ID" value="NC_002607.1"/>
</dbReference>
<dbReference type="SMR" id="Q9HSG5"/>
<dbReference type="FunCoup" id="Q9HSG5">
    <property type="interactions" value="70"/>
</dbReference>
<dbReference type="STRING" id="64091.VNG_0243C"/>
<dbReference type="PaxDb" id="64091-VNG_0243C"/>
<dbReference type="GeneID" id="68693206"/>
<dbReference type="KEGG" id="hal:VNG_0243C"/>
<dbReference type="PATRIC" id="fig|64091.14.peg.175"/>
<dbReference type="HOGENOM" id="CLU_005281_4_1_2"/>
<dbReference type="InParanoid" id="Q9HSG5"/>
<dbReference type="OrthoDB" id="1798at2157"/>
<dbReference type="PhylomeDB" id="Q9HSG5"/>
<dbReference type="Proteomes" id="UP000000554">
    <property type="component" value="Chromosome"/>
</dbReference>
<dbReference type="GO" id="GO:0009982">
    <property type="term" value="F:pseudouridine synthase activity"/>
    <property type="evidence" value="ECO:0000318"/>
    <property type="project" value="GO_Central"/>
</dbReference>
<dbReference type="GO" id="GO:0003723">
    <property type="term" value="F:RNA binding"/>
    <property type="evidence" value="ECO:0007669"/>
    <property type="project" value="InterPro"/>
</dbReference>
<dbReference type="GO" id="GO:0160150">
    <property type="term" value="F:tRNA pseudouridine(13) synthase activity"/>
    <property type="evidence" value="ECO:0007669"/>
    <property type="project" value="UniProtKB-EC"/>
</dbReference>
<dbReference type="GO" id="GO:0001522">
    <property type="term" value="P:pseudouridine synthesis"/>
    <property type="evidence" value="ECO:0000318"/>
    <property type="project" value="GO_Central"/>
</dbReference>
<dbReference type="GO" id="GO:0031119">
    <property type="term" value="P:tRNA pseudouridine synthesis"/>
    <property type="evidence" value="ECO:0007669"/>
    <property type="project" value="UniProtKB-UniRule"/>
</dbReference>
<dbReference type="CDD" id="cd02577">
    <property type="entry name" value="PSTD1"/>
    <property type="match status" value="1"/>
</dbReference>
<dbReference type="Gene3D" id="1.10.1510.30">
    <property type="match status" value="1"/>
</dbReference>
<dbReference type="Gene3D" id="3.30.70.3160">
    <property type="match status" value="1"/>
</dbReference>
<dbReference type="Gene3D" id="3.30.2350.20">
    <property type="entry name" value="TruD, catalytic domain"/>
    <property type="match status" value="1"/>
</dbReference>
<dbReference type="HAMAP" id="MF_01082">
    <property type="entry name" value="TruD"/>
    <property type="match status" value="1"/>
</dbReference>
<dbReference type="InterPro" id="IPR020103">
    <property type="entry name" value="PsdUridine_synth_cat_dom_sf"/>
</dbReference>
<dbReference type="InterPro" id="IPR001656">
    <property type="entry name" value="PsdUridine_synth_TruD"/>
</dbReference>
<dbReference type="InterPro" id="IPR020119">
    <property type="entry name" value="PsdUridine_synth_TruD_CS"/>
</dbReference>
<dbReference type="InterPro" id="IPR011760">
    <property type="entry name" value="PsdUridine_synth_TruD_insert"/>
</dbReference>
<dbReference type="InterPro" id="IPR042214">
    <property type="entry name" value="TruD_catalytic"/>
</dbReference>
<dbReference type="NCBIfam" id="NF002158">
    <property type="entry name" value="PRK00984.2-3"/>
    <property type="match status" value="1"/>
</dbReference>
<dbReference type="NCBIfam" id="TIGR00094">
    <property type="entry name" value="tRNA_TruD_broad"/>
    <property type="match status" value="1"/>
</dbReference>
<dbReference type="PANTHER" id="PTHR13326:SF21">
    <property type="entry name" value="PSEUDOURIDYLATE SYNTHASE PUS7L"/>
    <property type="match status" value="1"/>
</dbReference>
<dbReference type="PANTHER" id="PTHR13326">
    <property type="entry name" value="TRNA PSEUDOURIDINE SYNTHASE D"/>
    <property type="match status" value="1"/>
</dbReference>
<dbReference type="Pfam" id="PF01142">
    <property type="entry name" value="TruD"/>
    <property type="match status" value="1"/>
</dbReference>
<dbReference type="PIRSF" id="PIRSF037016">
    <property type="entry name" value="Pseudouridin_synth_euk_prd"/>
    <property type="match status" value="1"/>
</dbReference>
<dbReference type="SUPFAM" id="SSF55120">
    <property type="entry name" value="Pseudouridine synthase"/>
    <property type="match status" value="1"/>
</dbReference>
<dbReference type="PROSITE" id="PS50984">
    <property type="entry name" value="TRUD"/>
    <property type="match status" value="1"/>
</dbReference>
<dbReference type="PROSITE" id="PS01268">
    <property type="entry name" value="UPF0024"/>
    <property type="match status" value="1"/>
</dbReference>